<proteinExistence type="inferred from homology"/>
<dbReference type="EC" id="4.2.1.10" evidence="1"/>
<dbReference type="EMBL" id="CP000703">
    <property type="protein sequence ID" value="ABQ48630.1"/>
    <property type="molecule type" value="Genomic_DNA"/>
</dbReference>
<dbReference type="RefSeq" id="WP_000150011.1">
    <property type="nucleotide sequence ID" value="NC_009487.1"/>
</dbReference>
<dbReference type="SMR" id="A5IR07"/>
<dbReference type="KEGG" id="saj:SaurJH9_0828"/>
<dbReference type="HOGENOM" id="CLU_064444_2_1_9"/>
<dbReference type="UniPathway" id="UPA00053">
    <property type="reaction ID" value="UER00086"/>
</dbReference>
<dbReference type="GO" id="GO:0003855">
    <property type="term" value="F:3-dehydroquinate dehydratase activity"/>
    <property type="evidence" value="ECO:0007669"/>
    <property type="project" value="UniProtKB-UniRule"/>
</dbReference>
<dbReference type="GO" id="GO:0046279">
    <property type="term" value="P:3,4-dihydroxybenzoate biosynthetic process"/>
    <property type="evidence" value="ECO:0007669"/>
    <property type="project" value="TreeGrafter"/>
</dbReference>
<dbReference type="GO" id="GO:0008652">
    <property type="term" value="P:amino acid biosynthetic process"/>
    <property type="evidence" value="ECO:0007669"/>
    <property type="project" value="UniProtKB-KW"/>
</dbReference>
<dbReference type="GO" id="GO:0009073">
    <property type="term" value="P:aromatic amino acid family biosynthetic process"/>
    <property type="evidence" value="ECO:0007669"/>
    <property type="project" value="UniProtKB-KW"/>
</dbReference>
<dbReference type="GO" id="GO:0009423">
    <property type="term" value="P:chorismate biosynthetic process"/>
    <property type="evidence" value="ECO:0007669"/>
    <property type="project" value="UniProtKB-UniRule"/>
</dbReference>
<dbReference type="CDD" id="cd00502">
    <property type="entry name" value="DHQase_I"/>
    <property type="match status" value="1"/>
</dbReference>
<dbReference type="FunFam" id="3.20.20.70:FF:000216">
    <property type="entry name" value="3-dehydroquinate dehydratase"/>
    <property type="match status" value="1"/>
</dbReference>
<dbReference type="Gene3D" id="3.20.20.70">
    <property type="entry name" value="Aldolase class I"/>
    <property type="match status" value="1"/>
</dbReference>
<dbReference type="HAMAP" id="MF_00214">
    <property type="entry name" value="AroD"/>
    <property type="match status" value="1"/>
</dbReference>
<dbReference type="InterPro" id="IPR013785">
    <property type="entry name" value="Aldolase_TIM"/>
</dbReference>
<dbReference type="InterPro" id="IPR001381">
    <property type="entry name" value="DHquinase_I"/>
</dbReference>
<dbReference type="InterPro" id="IPR050146">
    <property type="entry name" value="Type-I_3-dehydroquinase"/>
</dbReference>
<dbReference type="NCBIfam" id="TIGR01093">
    <property type="entry name" value="aroD"/>
    <property type="match status" value="1"/>
</dbReference>
<dbReference type="PANTHER" id="PTHR43699">
    <property type="entry name" value="3-DEHYDROQUINATE DEHYDRATASE"/>
    <property type="match status" value="1"/>
</dbReference>
<dbReference type="PANTHER" id="PTHR43699:SF1">
    <property type="entry name" value="3-DEHYDROQUINATE DEHYDRATASE"/>
    <property type="match status" value="1"/>
</dbReference>
<dbReference type="Pfam" id="PF01487">
    <property type="entry name" value="DHquinase_I"/>
    <property type="match status" value="1"/>
</dbReference>
<dbReference type="SUPFAM" id="SSF51569">
    <property type="entry name" value="Aldolase"/>
    <property type="match status" value="1"/>
</dbReference>
<accession>A5IR07</accession>
<gene>
    <name evidence="1" type="primary">aroD</name>
    <name type="ordered locus">SaurJH9_0828</name>
</gene>
<sequence length="238" mass="26964">MTHVEVVATIAPQLSIEETLIQKINHRIDAIDVLELRIDQIENVTVDQVAEMITKLKVMQDSFKLLVTYRTKLQGGYGQFINDLYLNLISDLANINGIDMIDIEWQADIDIEKHQRIIKHLQQYNKEVVISHHNFESTPPLDELQFIFFKMQKFNPEYVKLAVMPHNKNDVLNLLQAMSTFSDTMDCKVVGISMSKLGLISRTAQGVFGGALTYGCIGEPQAPGQIDVTDLKAQVTLY</sequence>
<keyword id="KW-0028">Amino-acid biosynthesis</keyword>
<keyword id="KW-0057">Aromatic amino acid biosynthesis</keyword>
<keyword id="KW-0456">Lyase</keyword>
<keyword id="KW-0704">Schiff base</keyword>
<feature type="chain" id="PRO_1000078049" description="3-dehydroquinate dehydratase">
    <location>
        <begin position="1"/>
        <end position="238"/>
    </location>
</feature>
<feature type="active site" description="Proton donor/acceptor" evidence="1">
    <location>
        <position position="133"/>
    </location>
</feature>
<feature type="active site" description="Schiff-base intermediate with substrate" evidence="1">
    <location>
        <position position="160"/>
    </location>
</feature>
<feature type="binding site" evidence="1">
    <location>
        <begin position="35"/>
        <end position="37"/>
    </location>
    <ligand>
        <name>3-dehydroquinate</name>
        <dbReference type="ChEBI" id="CHEBI:32364"/>
    </ligand>
</feature>
<feature type="binding site" evidence="1">
    <location>
        <position position="70"/>
    </location>
    <ligand>
        <name>3-dehydroquinate</name>
        <dbReference type="ChEBI" id="CHEBI:32364"/>
    </ligand>
</feature>
<feature type="binding site" evidence="1">
    <location>
        <position position="202"/>
    </location>
    <ligand>
        <name>3-dehydroquinate</name>
        <dbReference type="ChEBI" id="CHEBI:32364"/>
    </ligand>
</feature>
<feature type="binding site" evidence="1">
    <location>
        <position position="225"/>
    </location>
    <ligand>
        <name>3-dehydroquinate</name>
        <dbReference type="ChEBI" id="CHEBI:32364"/>
    </ligand>
</feature>
<evidence type="ECO:0000255" key="1">
    <source>
        <dbReference type="HAMAP-Rule" id="MF_00214"/>
    </source>
</evidence>
<organism>
    <name type="scientific">Staphylococcus aureus (strain JH9)</name>
    <dbReference type="NCBI Taxonomy" id="359786"/>
    <lineage>
        <taxon>Bacteria</taxon>
        <taxon>Bacillati</taxon>
        <taxon>Bacillota</taxon>
        <taxon>Bacilli</taxon>
        <taxon>Bacillales</taxon>
        <taxon>Staphylococcaceae</taxon>
        <taxon>Staphylococcus</taxon>
    </lineage>
</organism>
<comment type="function">
    <text evidence="1">Involved in the third step of the chorismate pathway, which leads to the biosynthesis of aromatic amino acids. Catalyzes the cis-dehydration of 3-dehydroquinate (DHQ) and introduces the first double bond of the aromatic ring to yield 3-dehydroshikimate.</text>
</comment>
<comment type="catalytic activity">
    <reaction evidence="1">
        <text>3-dehydroquinate = 3-dehydroshikimate + H2O</text>
        <dbReference type="Rhea" id="RHEA:21096"/>
        <dbReference type="ChEBI" id="CHEBI:15377"/>
        <dbReference type="ChEBI" id="CHEBI:16630"/>
        <dbReference type="ChEBI" id="CHEBI:32364"/>
        <dbReference type="EC" id="4.2.1.10"/>
    </reaction>
</comment>
<comment type="pathway">
    <text evidence="1">Metabolic intermediate biosynthesis; chorismate biosynthesis; chorismate from D-erythrose 4-phosphate and phosphoenolpyruvate: step 3/7.</text>
</comment>
<comment type="subunit">
    <text evidence="1">Homodimer.</text>
</comment>
<comment type="similarity">
    <text evidence="1">Belongs to the type-I 3-dehydroquinase family.</text>
</comment>
<protein>
    <recommendedName>
        <fullName evidence="1">3-dehydroquinate dehydratase</fullName>
        <shortName evidence="1">3-dehydroquinase</shortName>
        <ecNumber evidence="1">4.2.1.10</ecNumber>
    </recommendedName>
    <alternativeName>
        <fullName evidence="1">Type I DHQase</fullName>
    </alternativeName>
    <alternativeName>
        <fullName evidence="1">Type I dehydroquinase</fullName>
        <shortName evidence="1">DHQ1</shortName>
    </alternativeName>
</protein>
<reference key="1">
    <citation type="submission" date="2007-05" db="EMBL/GenBank/DDBJ databases">
        <title>Complete sequence of chromosome of Staphylococcus aureus subsp. aureus JH9.</title>
        <authorList>
            <consortium name="US DOE Joint Genome Institute"/>
            <person name="Copeland A."/>
            <person name="Lucas S."/>
            <person name="Lapidus A."/>
            <person name="Barry K."/>
            <person name="Detter J.C."/>
            <person name="Glavina del Rio T."/>
            <person name="Hammon N."/>
            <person name="Israni S."/>
            <person name="Pitluck S."/>
            <person name="Chain P."/>
            <person name="Malfatti S."/>
            <person name="Shin M."/>
            <person name="Vergez L."/>
            <person name="Schmutz J."/>
            <person name="Larimer F."/>
            <person name="Land M."/>
            <person name="Hauser L."/>
            <person name="Kyrpides N."/>
            <person name="Kim E."/>
            <person name="Tomasz A."/>
            <person name="Richardson P."/>
        </authorList>
    </citation>
    <scope>NUCLEOTIDE SEQUENCE [LARGE SCALE GENOMIC DNA]</scope>
    <source>
        <strain>JH9</strain>
    </source>
</reference>
<name>AROD_STAA9</name>